<accession>Q114R3</accession>
<feature type="chain" id="PRO_1000085325" description="Chaperone protein DnaJ">
    <location>
        <begin position="1"/>
        <end position="374"/>
    </location>
</feature>
<feature type="domain" description="J" evidence="1">
    <location>
        <begin position="4"/>
        <end position="68"/>
    </location>
</feature>
<feature type="repeat" description="CXXCXGXG motif">
    <location>
        <begin position="145"/>
        <end position="152"/>
    </location>
</feature>
<feature type="repeat" description="CXXCXGXG motif">
    <location>
        <begin position="162"/>
        <end position="169"/>
    </location>
</feature>
<feature type="repeat" description="CXXCXGXG motif">
    <location>
        <begin position="188"/>
        <end position="195"/>
    </location>
</feature>
<feature type="repeat" description="CXXCXGXG motif">
    <location>
        <begin position="202"/>
        <end position="209"/>
    </location>
</feature>
<feature type="zinc finger region" description="CR-type" evidence="1">
    <location>
        <begin position="132"/>
        <end position="214"/>
    </location>
</feature>
<feature type="binding site" evidence="1">
    <location>
        <position position="145"/>
    </location>
    <ligand>
        <name>Zn(2+)</name>
        <dbReference type="ChEBI" id="CHEBI:29105"/>
        <label>1</label>
    </ligand>
</feature>
<feature type="binding site" evidence="1">
    <location>
        <position position="148"/>
    </location>
    <ligand>
        <name>Zn(2+)</name>
        <dbReference type="ChEBI" id="CHEBI:29105"/>
        <label>1</label>
    </ligand>
</feature>
<feature type="binding site" evidence="1">
    <location>
        <position position="162"/>
    </location>
    <ligand>
        <name>Zn(2+)</name>
        <dbReference type="ChEBI" id="CHEBI:29105"/>
        <label>2</label>
    </ligand>
</feature>
<feature type="binding site" evidence="1">
    <location>
        <position position="165"/>
    </location>
    <ligand>
        <name>Zn(2+)</name>
        <dbReference type="ChEBI" id="CHEBI:29105"/>
        <label>2</label>
    </ligand>
</feature>
<feature type="binding site" evidence="1">
    <location>
        <position position="188"/>
    </location>
    <ligand>
        <name>Zn(2+)</name>
        <dbReference type="ChEBI" id="CHEBI:29105"/>
        <label>2</label>
    </ligand>
</feature>
<feature type="binding site" evidence="1">
    <location>
        <position position="191"/>
    </location>
    <ligand>
        <name>Zn(2+)</name>
        <dbReference type="ChEBI" id="CHEBI:29105"/>
        <label>2</label>
    </ligand>
</feature>
<feature type="binding site" evidence="1">
    <location>
        <position position="202"/>
    </location>
    <ligand>
        <name>Zn(2+)</name>
        <dbReference type="ChEBI" id="CHEBI:29105"/>
        <label>1</label>
    </ligand>
</feature>
<feature type="binding site" evidence="1">
    <location>
        <position position="205"/>
    </location>
    <ligand>
        <name>Zn(2+)</name>
        <dbReference type="ChEBI" id="CHEBI:29105"/>
        <label>1</label>
    </ligand>
</feature>
<evidence type="ECO:0000255" key="1">
    <source>
        <dbReference type="HAMAP-Rule" id="MF_01152"/>
    </source>
</evidence>
<reference key="1">
    <citation type="journal article" date="2015" name="Proc. Natl. Acad. Sci. U.S.A.">
        <title>Trichodesmium genome maintains abundant, widespread noncoding DNA in situ, despite oligotrophic lifestyle.</title>
        <authorList>
            <person name="Walworth N."/>
            <person name="Pfreundt U."/>
            <person name="Nelson W.C."/>
            <person name="Mincer T."/>
            <person name="Heidelberg J.F."/>
            <person name="Fu F."/>
            <person name="Waterbury J.B."/>
            <person name="Glavina del Rio T."/>
            <person name="Goodwin L."/>
            <person name="Kyrpides N.C."/>
            <person name="Land M.L."/>
            <person name="Woyke T."/>
            <person name="Hutchins D.A."/>
            <person name="Hess W.R."/>
            <person name="Webb E.A."/>
        </authorList>
    </citation>
    <scope>NUCLEOTIDE SEQUENCE [LARGE SCALE GENOMIC DNA]</scope>
    <source>
        <strain>IMS101</strain>
    </source>
</reference>
<protein>
    <recommendedName>
        <fullName evidence="1">Chaperone protein DnaJ</fullName>
    </recommendedName>
</protein>
<gene>
    <name evidence="1" type="primary">dnaJ</name>
    <name type="ordered locus">Tery_1751</name>
</gene>
<comment type="function">
    <text evidence="1">Participates actively in the response to hyperosmotic and heat shock by preventing the aggregation of stress-denatured proteins and by disaggregating proteins, also in an autonomous, DnaK-independent fashion. Unfolded proteins bind initially to DnaJ; upon interaction with the DnaJ-bound protein, DnaK hydrolyzes its bound ATP, resulting in the formation of a stable complex. GrpE releases ADP from DnaK; ATP binding to DnaK triggers the release of the substrate protein, thus completing the reaction cycle. Several rounds of ATP-dependent interactions between DnaJ, DnaK and GrpE are required for fully efficient folding. Also involved, together with DnaK and GrpE, in the DNA replication of plasmids through activation of initiation proteins.</text>
</comment>
<comment type="cofactor">
    <cofactor evidence="1">
        <name>Zn(2+)</name>
        <dbReference type="ChEBI" id="CHEBI:29105"/>
    </cofactor>
    <text evidence="1">Binds 2 Zn(2+) ions per monomer.</text>
</comment>
<comment type="subunit">
    <text evidence="1">Homodimer.</text>
</comment>
<comment type="subcellular location">
    <subcellularLocation>
        <location evidence="1">Cytoplasm</location>
    </subcellularLocation>
</comment>
<comment type="domain">
    <text evidence="1">The J domain is necessary and sufficient to stimulate DnaK ATPase activity. Zinc center 1 plays an important role in the autonomous, DnaK-independent chaperone activity of DnaJ. Zinc center 2 is essential for interaction with DnaK and for DnaJ activity.</text>
</comment>
<comment type="similarity">
    <text evidence="1">Belongs to the DnaJ family.</text>
</comment>
<dbReference type="EMBL" id="CP000393">
    <property type="protein sequence ID" value="ABG51011.1"/>
    <property type="molecule type" value="Genomic_DNA"/>
</dbReference>
<dbReference type="RefSeq" id="WP_011611386.1">
    <property type="nucleotide sequence ID" value="NC_008312.1"/>
</dbReference>
<dbReference type="SMR" id="Q114R3"/>
<dbReference type="STRING" id="203124.Tery_1751"/>
<dbReference type="KEGG" id="ter:Tery_1751"/>
<dbReference type="eggNOG" id="COG0484">
    <property type="taxonomic scope" value="Bacteria"/>
</dbReference>
<dbReference type="HOGENOM" id="CLU_017633_0_1_3"/>
<dbReference type="OrthoDB" id="9779889at2"/>
<dbReference type="GO" id="GO:0005737">
    <property type="term" value="C:cytoplasm"/>
    <property type="evidence" value="ECO:0007669"/>
    <property type="project" value="UniProtKB-SubCell"/>
</dbReference>
<dbReference type="GO" id="GO:0005524">
    <property type="term" value="F:ATP binding"/>
    <property type="evidence" value="ECO:0007669"/>
    <property type="project" value="InterPro"/>
</dbReference>
<dbReference type="GO" id="GO:0031072">
    <property type="term" value="F:heat shock protein binding"/>
    <property type="evidence" value="ECO:0007669"/>
    <property type="project" value="InterPro"/>
</dbReference>
<dbReference type="GO" id="GO:0051082">
    <property type="term" value="F:unfolded protein binding"/>
    <property type="evidence" value="ECO:0007669"/>
    <property type="project" value="UniProtKB-UniRule"/>
</dbReference>
<dbReference type="GO" id="GO:0008270">
    <property type="term" value="F:zinc ion binding"/>
    <property type="evidence" value="ECO:0007669"/>
    <property type="project" value="UniProtKB-UniRule"/>
</dbReference>
<dbReference type="GO" id="GO:0051085">
    <property type="term" value="P:chaperone cofactor-dependent protein refolding"/>
    <property type="evidence" value="ECO:0007669"/>
    <property type="project" value="TreeGrafter"/>
</dbReference>
<dbReference type="GO" id="GO:0006260">
    <property type="term" value="P:DNA replication"/>
    <property type="evidence" value="ECO:0007669"/>
    <property type="project" value="UniProtKB-KW"/>
</dbReference>
<dbReference type="GO" id="GO:0042026">
    <property type="term" value="P:protein refolding"/>
    <property type="evidence" value="ECO:0007669"/>
    <property type="project" value="TreeGrafter"/>
</dbReference>
<dbReference type="GO" id="GO:0009408">
    <property type="term" value="P:response to heat"/>
    <property type="evidence" value="ECO:0007669"/>
    <property type="project" value="InterPro"/>
</dbReference>
<dbReference type="CDD" id="cd06257">
    <property type="entry name" value="DnaJ"/>
    <property type="match status" value="1"/>
</dbReference>
<dbReference type="CDD" id="cd10747">
    <property type="entry name" value="DnaJ_C"/>
    <property type="match status" value="1"/>
</dbReference>
<dbReference type="CDD" id="cd10719">
    <property type="entry name" value="DnaJ_zf"/>
    <property type="match status" value="1"/>
</dbReference>
<dbReference type="FunFam" id="2.60.260.20:FF:000005">
    <property type="entry name" value="Chaperone protein dnaJ 1, mitochondrial"/>
    <property type="match status" value="1"/>
</dbReference>
<dbReference type="FunFam" id="2.10.230.10:FF:000002">
    <property type="entry name" value="Molecular chaperone DnaJ"/>
    <property type="match status" value="1"/>
</dbReference>
<dbReference type="Gene3D" id="1.10.287.110">
    <property type="entry name" value="DnaJ domain"/>
    <property type="match status" value="1"/>
</dbReference>
<dbReference type="Gene3D" id="2.10.230.10">
    <property type="entry name" value="Heat shock protein DnaJ, cysteine-rich domain"/>
    <property type="match status" value="1"/>
</dbReference>
<dbReference type="Gene3D" id="2.60.260.20">
    <property type="entry name" value="Urease metallochaperone UreE, N-terminal domain"/>
    <property type="match status" value="2"/>
</dbReference>
<dbReference type="HAMAP" id="MF_01152">
    <property type="entry name" value="DnaJ"/>
    <property type="match status" value="1"/>
</dbReference>
<dbReference type="InterPro" id="IPR012724">
    <property type="entry name" value="DnaJ"/>
</dbReference>
<dbReference type="InterPro" id="IPR002939">
    <property type="entry name" value="DnaJ_C"/>
</dbReference>
<dbReference type="InterPro" id="IPR001623">
    <property type="entry name" value="DnaJ_domain"/>
</dbReference>
<dbReference type="InterPro" id="IPR018253">
    <property type="entry name" value="DnaJ_domain_CS"/>
</dbReference>
<dbReference type="InterPro" id="IPR008971">
    <property type="entry name" value="HSP40/DnaJ_pept-bd"/>
</dbReference>
<dbReference type="InterPro" id="IPR001305">
    <property type="entry name" value="HSP_DnaJ_Cys-rich_dom"/>
</dbReference>
<dbReference type="InterPro" id="IPR036410">
    <property type="entry name" value="HSP_DnaJ_Cys-rich_dom_sf"/>
</dbReference>
<dbReference type="InterPro" id="IPR036869">
    <property type="entry name" value="J_dom_sf"/>
</dbReference>
<dbReference type="NCBIfam" id="TIGR02349">
    <property type="entry name" value="DnaJ_bact"/>
    <property type="match status" value="1"/>
</dbReference>
<dbReference type="NCBIfam" id="NF008035">
    <property type="entry name" value="PRK10767.1"/>
    <property type="match status" value="1"/>
</dbReference>
<dbReference type="NCBIfam" id="NF010886">
    <property type="entry name" value="PRK14293.1"/>
    <property type="match status" value="1"/>
</dbReference>
<dbReference type="PANTHER" id="PTHR43096:SF10">
    <property type="entry name" value="CHAPERONE PROTEIN DNAJ A6, CHLOROPLASTIC"/>
    <property type="match status" value="1"/>
</dbReference>
<dbReference type="PANTHER" id="PTHR43096">
    <property type="entry name" value="DNAJ HOMOLOG 1, MITOCHONDRIAL-RELATED"/>
    <property type="match status" value="1"/>
</dbReference>
<dbReference type="Pfam" id="PF00226">
    <property type="entry name" value="DnaJ"/>
    <property type="match status" value="1"/>
</dbReference>
<dbReference type="Pfam" id="PF01556">
    <property type="entry name" value="DnaJ_C"/>
    <property type="match status" value="1"/>
</dbReference>
<dbReference type="Pfam" id="PF00684">
    <property type="entry name" value="DnaJ_CXXCXGXG"/>
    <property type="match status" value="1"/>
</dbReference>
<dbReference type="PRINTS" id="PR00625">
    <property type="entry name" value="JDOMAIN"/>
</dbReference>
<dbReference type="SMART" id="SM00271">
    <property type="entry name" value="DnaJ"/>
    <property type="match status" value="1"/>
</dbReference>
<dbReference type="SUPFAM" id="SSF46565">
    <property type="entry name" value="Chaperone J-domain"/>
    <property type="match status" value="1"/>
</dbReference>
<dbReference type="SUPFAM" id="SSF57938">
    <property type="entry name" value="DnaJ/Hsp40 cysteine-rich domain"/>
    <property type="match status" value="1"/>
</dbReference>
<dbReference type="SUPFAM" id="SSF49493">
    <property type="entry name" value="HSP40/DnaJ peptide-binding domain"/>
    <property type="match status" value="2"/>
</dbReference>
<dbReference type="PROSITE" id="PS00636">
    <property type="entry name" value="DNAJ_1"/>
    <property type="match status" value="1"/>
</dbReference>
<dbReference type="PROSITE" id="PS50076">
    <property type="entry name" value="DNAJ_2"/>
    <property type="match status" value="1"/>
</dbReference>
<dbReference type="PROSITE" id="PS51188">
    <property type="entry name" value="ZF_CR"/>
    <property type="match status" value="1"/>
</dbReference>
<sequence>MARDYYEILGVSRSADKEELKRAYRRLARKYHPDVNKEPGSEERFKEINRAYEILSDPEMKARFDRFGEAGVSGGAASGFSTDFSDSFADIFESFFSGFGGAGTQGRRRTGPVRGDDLRLDLNLEFIEAIFGGDKELTIKHLETCGTCNGSGAKPGTKPQTCSTCGGTGQVRRATRTPFSSFTQVSVCPSCNGSGQIIEEKCVDCGGRGQKEATKKIKITIPGGVDNGTRLRVSNEGDAGRMGGPPGDLYVFLSVKNHPEFQRDGINIISQIKISYLQAILGCCLEINTVDGKTELTIPSGTQPNAILTLEDKGVPRLGNSVSRGAHLITIEIDIPTKITPEEKELLEKLAKIKGERTGKGGIEGFLGSWFQQK</sequence>
<organism>
    <name type="scientific">Trichodesmium erythraeum (strain IMS101)</name>
    <dbReference type="NCBI Taxonomy" id="203124"/>
    <lineage>
        <taxon>Bacteria</taxon>
        <taxon>Bacillati</taxon>
        <taxon>Cyanobacteriota</taxon>
        <taxon>Cyanophyceae</taxon>
        <taxon>Oscillatoriophycideae</taxon>
        <taxon>Oscillatoriales</taxon>
        <taxon>Microcoleaceae</taxon>
        <taxon>Trichodesmium</taxon>
    </lineage>
</organism>
<keyword id="KW-0143">Chaperone</keyword>
<keyword id="KW-0963">Cytoplasm</keyword>
<keyword id="KW-0235">DNA replication</keyword>
<keyword id="KW-0479">Metal-binding</keyword>
<keyword id="KW-0677">Repeat</keyword>
<keyword id="KW-0346">Stress response</keyword>
<keyword id="KW-0862">Zinc</keyword>
<keyword id="KW-0863">Zinc-finger</keyword>
<proteinExistence type="inferred from homology"/>
<name>DNAJ_TRIEI</name>